<reference key="1">
    <citation type="journal article" date="2004" name="J. Gen. Virol.">
        <title>Genetic content of wild-type human cytomegalovirus.</title>
        <authorList>
            <person name="Dolan A."/>
            <person name="Cunningham C."/>
            <person name="Hector R.D."/>
            <person name="Hassan-Walker A.F."/>
            <person name="Lee L."/>
            <person name="Addison C."/>
            <person name="Dargan D.J."/>
            <person name="McGeoch D.J."/>
            <person name="Gatherer D."/>
            <person name="Emery V.C."/>
            <person name="Griffiths P.D."/>
            <person name="Sinzger C."/>
            <person name="McSharry B.P."/>
            <person name="Wilkinson G.W.G."/>
            <person name="Davison A.J."/>
        </authorList>
    </citation>
    <scope>NUCLEOTIDE SEQUENCE [LARGE SCALE GENOMIC DNA]</scope>
</reference>
<organismHost>
    <name type="scientific">Homo sapiens</name>
    <name type="common">Human</name>
    <dbReference type="NCBI Taxonomy" id="9606"/>
</organismHost>
<sequence length="684" mass="70270">MDLPTTVVRKYWTFTNPNRILHQSVNQTFDVRQFVFDNARLVNCVDGDGKVLHLNKGWLCATIMQHGEASAGAKTQQGFMSIDITGDGELQEHLFVRGGIVFNKSVSSVVGSSGPNESALLTMISENGNLQVTYVRHYLKNHGESSGGGGGCGAASTASAVCVSSLGGSGGTRDGPSAEEQQRRRQEQRHEERRKKSSSSAGGGGGGGASGGGGGGGSGGQHSSDSANGLLRDPRLMNRQKERRPPPSSENDGSPPLREAKRQKTTAQHEGHGGGGKNETEQQSGGAGGGGGGGSGRMSLPLDTSEAVAFLNYSSSSSAVSSSSNNHHHHHHHHNAVTDVAAGTDGALLLPIERGAVVSSPSSTSPSSLLSLPRPSSAHSAGETVQESEAAATAAAAGLMMMRRMRRAPAEAAEAPPQSEEENDSTTPVSNCRVPPNSQESAAPQPPRSPRFDDIIQSLTKMLNDCKEKRLCDLPLVSSRLLPETSGGTVVVNHSSVARTAAAVSTAGVGPPAVACPPLVTTGVVPSGSVAGVAPVAAAVETPAAPPRPVCEIKPYVVNPVVATAAAASNSSSSSSAPLPPPPPPPGGRRGRARNNTRGGGGGGGGGRNSRRQAASSSSSSSRRSRRRNNRHEDEDNDPLLRLSQVAGSGRRRGPSFLEDGLEIIDPSEEAAIAAASIAAFFDD</sequence>
<accession>Q6SW37</accession>
<accession>D2K3R3</accession>
<keyword id="KW-0025">Alternative splicing</keyword>
<keyword id="KW-0244">Early protein</keyword>
<keyword id="KW-1048">Host nucleus</keyword>
<keyword id="KW-0597">Phosphoprotein</keyword>
<keyword id="KW-1185">Reference proteome</keyword>
<keyword id="KW-0946">Virion</keyword>
<dbReference type="EMBL" id="AY446894">
    <property type="protein sequence ID" value="AAR31657.1"/>
    <property type="molecule type" value="Genomic_DNA"/>
</dbReference>
<dbReference type="SMR" id="Q6SW37"/>
<dbReference type="KEGG" id="vg:3077495"/>
<dbReference type="Reactome" id="R-HSA-9609690">
    <property type="pathway name" value="HCMV Early Events"/>
</dbReference>
<dbReference type="Reactome" id="R-HSA-9610379">
    <property type="pathway name" value="HCMV Late Events"/>
</dbReference>
<dbReference type="Proteomes" id="UP000000938">
    <property type="component" value="Segment"/>
</dbReference>
<dbReference type="GO" id="GO:0042025">
    <property type="term" value="C:host cell nucleus"/>
    <property type="evidence" value="ECO:0007669"/>
    <property type="project" value="UniProtKB-SubCell"/>
</dbReference>
<dbReference type="GO" id="GO:0019033">
    <property type="term" value="C:viral tegument"/>
    <property type="evidence" value="ECO:0000304"/>
    <property type="project" value="Reactome"/>
</dbReference>
<dbReference type="InterPro" id="IPR004138">
    <property type="entry name" value="U79_P34"/>
</dbReference>
<dbReference type="Pfam" id="PF03064">
    <property type="entry name" value="U79_P34"/>
    <property type="match status" value="1"/>
</dbReference>
<evidence type="ECO:0000250" key="1">
    <source>
        <dbReference type="UniProtKB" id="P17151"/>
    </source>
</evidence>
<evidence type="ECO:0000255" key="2"/>
<evidence type="ECO:0000256" key="3">
    <source>
        <dbReference type="SAM" id="MobiDB-lite"/>
    </source>
</evidence>
<evidence type="ECO:0000305" key="4"/>
<organism>
    <name type="scientific">Human cytomegalovirus (strain Merlin)</name>
    <name type="common">HHV-5</name>
    <name type="synonym">Human herpesvirus 5</name>
    <dbReference type="NCBI Taxonomy" id="295027"/>
    <lineage>
        <taxon>Viruses</taxon>
        <taxon>Duplodnaviria</taxon>
        <taxon>Heunggongvirae</taxon>
        <taxon>Peploviricota</taxon>
        <taxon>Herviviricetes</taxon>
        <taxon>Herpesvirales</taxon>
        <taxon>Orthoherpesviridae</taxon>
        <taxon>Betaherpesvirinae</taxon>
        <taxon>Cytomegalovirus</taxon>
        <taxon>Cytomegalovirus humanbeta5</taxon>
        <taxon>Human cytomegalovirus</taxon>
    </lineage>
</organism>
<feature type="chain" id="PRO_0000416710" description="Early phosphoprotein p84">
    <location>
        <begin position="1"/>
        <end position="684"/>
    </location>
</feature>
<feature type="region of interest" description="Disordered" evidence="3">
    <location>
        <begin position="166"/>
        <end position="301"/>
    </location>
</feature>
<feature type="region of interest" description="Disordered" evidence="3">
    <location>
        <begin position="317"/>
        <end position="336"/>
    </location>
</feature>
<feature type="region of interest" description="Disordered" evidence="3">
    <location>
        <begin position="357"/>
        <end position="393"/>
    </location>
</feature>
<feature type="region of interest" description="Disordered" evidence="3">
    <location>
        <begin position="407"/>
        <end position="452"/>
    </location>
</feature>
<feature type="region of interest" description="Disordered" evidence="3">
    <location>
        <begin position="569"/>
        <end position="657"/>
    </location>
</feature>
<feature type="short sequence motif" description="Nuclear localization signal" evidence="2">
    <location>
        <begin position="261"/>
        <end position="264"/>
    </location>
</feature>
<feature type="compositionally biased region" description="Basic and acidic residues" evidence="3">
    <location>
        <begin position="180"/>
        <end position="191"/>
    </location>
</feature>
<feature type="compositionally biased region" description="Gly residues" evidence="3">
    <location>
        <begin position="201"/>
        <end position="220"/>
    </location>
</feature>
<feature type="compositionally biased region" description="Basic and acidic residues" evidence="3">
    <location>
        <begin position="232"/>
        <end position="245"/>
    </location>
</feature>
<feature type="compositionally biased region" description="Basic and acidic residues" evidence="3">
    <location>
        <begin position="258"/>
        <end position="272"/>
    </location>
</feature>
<feature type="compositionally biased region" description="Gly residues" evidence="3">
    <location>
        <begin position="285"/>
        <end position="296"/>
    </location>
</feature>
<feature type="compositionally biased region" description="Basic residues" evidence="3">
    <location>
        <begin position="326"/>
        <end position="335"/>
    </location>
</feature>
<feature type="compositionally biased region" description="Low complexity" evidence="3">
    <location>
        <begin position="359"/>
        <end position="377"/>
    </location>
</feature>
<feature type="compositionally biased region" description="Polar residues" evidence="3">
    <location>
        <begin position="425"/>
        <end position="442"/>
    </location>
</feature>
<feature type="compositionally biased region" description="Pro residues" evidence="3">
    <location>
        <begin position="578"/>
        <end position="587"/>
    </location>
</feature>
<feature type="compositionally biased region" description="Gly residues" evidence="3">
    <location>
        <begin position="598"/>
        <end position="608"/>
    </location>
</feature>
<feature type="compositionally biased region" description="Low complexity" evidence="3">
    <location>
        <begin position="612"/>
        <end position="622"/>
    </location>
</feature>
<feature type="splice variant" id="VSP_042760" description="In isoform p34." evidence="4">
    <original>SPPLREAKRQKTTAQ</original>
    <variation>ESRPSSRHGAFRVDS</variation>
    <location>
        <begin position="254"/>
        <end position="268"/>
    </location>
</feature>
<feature type="splice variant" id="VSP_042761" description="In isoform p34." evidence="4">
    <location>
        <begin position="269"/>
        <end position="684"/>
    </location>
</feature>
<feature type="splice variant" id="VSP_042762" description="In isoform p50." evidence="4">
    <original>GALLLPIERGAVVSSPSSTSPSSLLSLPRPSSAHSAGETVQESEAAATAAAAGLMMMRRMRRAPAEAAEAPPQSEEEN</original>
    <variation>DSCQRRRAGLSSSTTAASRGPPQLSPQPALAPQQSHVRHSSPPVLYPQVPSPVSRPLPPQSKHQLLLPGPCVKSSPTW</variation>
    <location>
        <begin position="346"/>
        <end position="423"/>
    </location>
</feature>
<feature type="splice variant" id="VSP_042763" description="In isoform p43." evidence="4">
    <original>ALLLPIERGAVV</original>
    <variation>IRGASASSQSAF</variation>
    <location>
        <begin position="347"/>
        <end position="358"/>
    </location>
</feature>
<feature type="splice variant" id="VSP_042764" description="In isoform p43." evidence="4">
    <location>
        <begin position="359"/>
        <end position="684"/>
    </location>
</feature>
<feature type="splice variant" id="VSP_042765" description="In isoform p50." evidence="4">
    <location>
        <begin position="424"/>
        <end position="684"/>
    </location>
</feature>
<protein>
    <recommendedName>
        <fullName>Early phosphoprotein p84</fullName>
    </recommendedName>
</protein>
<comment type="function">
    <text>Needed for efficient replication. Recruits the DNA polymerase processivity factor to pre-replication foci.</text>
</comment>
<comment type="subunit">
    <text>Isoforms 1, 2, 3 and 4 interacts with themselves and with each other via their shared N-terminal regions; these interactions are important to both their intranuclear targeting and the recruitment of UL44 to subnuclear sites for viral replication.</text>
</comment>
<comment type="subcellular location">
    <subcellularLocation>
        <location>Host nucleus</location>
    </subcellularLocation>
    <subcellularLocation>
        <location>Virion</location>
    </subcellularLocation>
    <text evidence="1">Found in subnuclear structures known as promyelocytic leukemia oncogenic domains (PODs) or nuclear domain 10 (ND10) during the early.</text>
</comment>
<comment type="alternative products">
    <event type="alternative splicing"/>
    <isoform>
        <id>Q6SW37-1</id>
        <name>p84</name>
        <name>84 kDa phosphoprotein</name>
        <sequence type="displayed"/>
    </isoform>
    <isoform>
        <id>Q6SW37-2</id>
        <name>p50</name>
        <name>50 kDa phosphoprotein</name>
        <sequence type="described" ref="VSP_042762 VSP_042765"/>
    </isoform>
    <isoform>
        <id>Q6SW37-3</id>
        <name>p43</name>
        <name>43 kDa phosphoprotein</name>
        <sequence type="described" ref="VSP_042763 VSP_042764"/>
    </isoform>
    <isoform>
        <id>Q6SW37-4</id>
        <name>p34</name>
        <name>34 kDa phosphoprotein</name>
        <sequence type="described" ref="VSP_042760 VSP_042761"/>
    </isoform>
    <text>Isoforms 1, 2, 3 and 4 share a common N-terminus.</text>
</comment>
<comment type="miscellaneous">
    <molecule>Isoform p43</molecule>
    <text evidence="4">Most abundant product which level of expression remains constant throughout infection.</text>
</comment>
<comment type="similarity">
    <text evidence="4">Belongs to the herpesviridae U79/UL112 family.</text>
</comment>
<proteinExistence type="inferred from homology"/>
<gene>
    <name type="primary">UL112/UL113</name>
</gene>
<name>EP84_HCMVM</name>